<evidence type="ECO:0000255" key="1">
    <source>
        <dbReference type="HAMAP-Rule" id="MF_00463"/>
    </source>
</evidence>
<accession>Q9KT87</accession>
<dbReference type="EC" id="7.-.-.-" evidence="1"/>
<dbReference type="EMBL" id="AE003852">
    <property type="protein sequence ID" value="AAF94177.1"/>
    <property type="molecule type" value="Genomic_DNA"/>
</dbReference>
<dbReference type="PIR" id="F82252">
    <property type="entry name" value="F82252"/>
</dbReference>
<dbReference type="RefSeq" id="NP_230662.1">
    <property type="nucleotide sequence ID" value="NC_002505.1"/>
</dbReference>
<dbReference type="STRING" id="243277.VC_1016"/>
<dbReference type="DNASU" id="2614287"/>
<dbReference type="EnsemblBacteria" id="AAF94177">
    <property type="protein sequence ID" value="AAF94177"/>
    <property type="gene ID" value="VC_1016"/>
</dbReference>
<dbReference type="KEGG" id="vch:VC_1016"/>
<dbReference type="PATRIC" id="fig|243277.26.peg.970"/>
<dbReference type="eggNOG" id="COG2878">
    <property type="taxonomic scope" value="Bacteria"/>
</dbReference>
<dbReference type="HOGENOM" id="CLU_063448_2_0_6"/>
<dbReference type="Proteomes" id="UP000000584">
    <property type="component" value="Chromosome 1"/>
</dbReference>
<dbReference type="GO" id="GO:0005886">
    <property type="term" value="C:plasma membrane"/>
    <property type="evidence" value="ECO:0007669"/>
    <property type="project" value="UniProtKB-SubCell"/>
</dbReference>
<dbReference type="GO" id="GO:0051539">
    <property type="term" value="F:4 iron, 4 sulfur cluster binding"/>
    <property type="evidence" value="ECO:0007669"/>
    <property type="project" value="UniProtKB-UniRule"/>
</dbReference>
<dbReference type="GO" id="GO:0009055">
    <property type="term" value="F:electron transfer activity"/>
    <property type="evidence" value="ECO:0007669"/>
    <property type="project" value="InterPro"/>
</dbReference>
<dbReference type="GO" id="GO:0046872">
    <property type="term" value="F:metal ion binding"/>
    <property type="evidence" value="ECO:0007669"/>
    <property type="project" value="UniProtKB-KW"/>
</dbReference>
<dbReference type="GO" id="GO:0022900">
    <property type="term" value="P:electron transport chain"/>
    <property type="evidence" value="ECO:0007669"/>
    <property type="project" value="UniProtKB-UniRule"/>
</dbReference>
<dbReference type="FunFam" id="1.10.15.40:FF:000001">
    <property type="entry name" value="Ion-translocating oxidoreductase complex subunit B"/>
    <property type="match status" value="1"/>
</dbReference>
<dbReference type="Gene3D" id="3.30.70.20">
    <property type="match status" value="2"/>
</dbReference>
<dbReference type="Gene3D" id="1.10.15.40">
    <property type="entry name" value="Electron transport complex subunit B, putative Fe-S cluster"/>
    <property type="match status" value="1"/>
</dbReference>
<dbReference type="HAMAP" id="MF_00463">
    <property type="entry name" value="RsxB_RnfB"/>
    <property type="match status" value="1"/>
</dbReference>
<dbReference type="InterPro" id="IPR007202">
    <property type="entry name" value="4Fe-4S_dom"/>
</dbReference>
<dbReference type="InterPro" id="IPR017896">
    <property type="entry name" value="4Fe4S_Fe-S-bd"/>
</dbReference>
<dbReference type="InterPro" id="IPR017900">
    <property type="entry name" value="4Fe4S_Fe_S_CS"/>
</dbReference>
<dbReference type="InterPro" id="IPR010207">
    <property type="entry name" value="Elect_transpt_cplx_RnfB/RsxB"/>
</dbReference>
<dbReference type="InterPro" id="IPR016463">
    <property type="entry name" value="RnfB/RsxB_Proteobac"/>
</dbReference>
<dbReference type="InterPro" id="IPR050294">
    <property type="entry name" value="RnfB_subfamily"/>
</dbReference>
<dbReference type="NCBIfam" id="NF003475">
    <property type="entry name" value="PRK05113.1"/>
    <property type="match status" value="1"/>
</dbReference>
<dbReference type="NCBIfam" id="TIGR01944">
    <property type="entry name" value="rnfB"/>
    <property type="match status" value="1"/>
</dbReference>
<dbReference type="PANTHER" id="PTHR42859:SF3">
    <property type="entry name" value="ION-TRANSLOCATING OXIDOREDUCTASE COMPLEX SUBUNIT B"/>
    <property type="match status" value="1"/>
</dbReference>
<dbReference type="PANTHER" id="PTHR42859">
    <property type="entry name" value="OXIDOREDUCTASE"/>
    <property type="match status" value="1"/>
</dbReference>
<dbReference type="Pfam" id="PF14697">
    <property type="entry name" value="Fer4_21"/>
    <property type="match status" value="1"/>
</dbReference>
<dbReference type="Pfam" id="PF04060">
    <property type="entry name" value="FeS"/>
    <property type="match status" value="1"/>
</dbReference>
<dbReference type="PIRSF" id="PIRSF005784">
    <property type="entry name" value="Elect_transpt_RnfB"/>
    <property type="match status" value="1"/>
</dbReference>
<dbReference type="SUPFAM" id="SSF54862">
    <property type="entry name" value="4Fe-4S ferredoxins"/>
    <property type="match status" value="1"/>
</dbReference>
<dbReference type="PROSITE" id="PS51656">
    <property type="entry name" value="4FE4S"/>
    <property type="match status" value="1"/>
</dbReference>
<dbReference type="PROSITE" id="PS00198">
    <property type="entry name" value="4FE4S_FER_1"/>
    <property type="match status" value="2"/>
</dbReference>
<dbReference type="PROSITE" id="PS51379">
    <property type="entry name" value="4FE4S_FER_2"/>
    <property type="match status" value="2"/>
</dbReference>
<feature type="chain" id="PRO_0000216280" description="Ion-translocating oxidoreductase complex subunit B">
    <location>
        <begin position="1"/>
        <end position="195"/>
    </location>
</feature>
<feature type="domain" description="4Fe-4S" evidence="1">
    <location>
        <begin position="32"/>
        <end position="90"/>
    </location>
</feature>
<feature type="domain" description="4Fe-4S ferredoxin-type 1" evidence="1">
    <location>
        <begin position="105"/>
        <end position="134"/>
    </location>
</feature>
<feature type="domain" description="4Fe-4S ferredoxin-type 2" evidence="1">
    <location>
        <begin position="135"/>
        <end position="164"/>
    </location>
</feature>
<feature type="region of interest" description="Hydrophobic" evidence="1">
    <location>
        <begin position="1"/>
        <end position="26"/>
    </location>
</feature>
<feature type="binding site" evidence="1">
    <location>
        <position position="49"/>
    </location>
    <ligand>
        <name>[4Fe-4S] cluster</name>
        <dbReference type="ChEBI" id="CHEBI:49883"/>
        <label>1</label>
    </ligand>
</feature>
<feature type="binding site" evidence="1">
    <location>
        <position position="52"/>
    </location>
    <ligand>
        <name>[4Fe-4S] cluster</name>
        <dbReference type="ChEBI" id="CHEBI:49883"/>
        <label>1</label>
    </ligand>
</feature>
<feature type="binding site" evidence="1">
    <location>
        <position position="57"/>
    </location>
    <ligand>
        <name>[4Fe-4S] cluster</name>
        <dbReference type="ChEBI" id="CHEBI:49883"/>
        <label>1</label>
    </ligand>
</feature>
<feature type="binding site" evidence="1">
    <location>
        <position position="73"/>
    </location>
    <ligand>
        <name>[4Fe-4S] cluster</name>
        <dbReference type="ChEBI" id="CHEBI:49883"/>
        <label>1</label>
    </ligand>
</feature>
<feature type="binding site" evidence="1">
    <location>
        <position position="114"/>
    </location>
    <ligand>
        <name>[4Fe-4S] cluster</name>
        <dbReference type="ChEBI" id="CHEBI:49883"/>
        <label>2</label>
    </ligand>
</feature>
<feature type="binding site" evidence="1">
    <location>
        <position position="117"/>
    </location>
    <ligand>
        <name>[4Fe-4S] cluster</name>
        <dbReference type="ChEBI" id="CHEBI:49883"/>
        <label>2</label>
    </ligand>
</feature>
<feature type="binding site" evidence="1">
    <location>
        <position position="120"/>
    </location>
    <ligand>
        <name>[4Fe-4S] cluster</name>
        <dbReference type="ChEBI" id="CHEBI:49883"/>
        <label>2</label>
    </ligand>
</feature>
<feature type="binding site" evidence="1">
    <location>
        <position position="124"/>
    </location>
    <ligand>
        <name>[4Fe-4S] cluster</name>
        <dbReference type="ChEBI" id="CHEBI:49883"/>
        <label>3</label>
    </ligand>
</feature>
<feature type="binding site" evidence="1">
    <location>
        <position position="144"/>
    </location>
    <ligand>
        <name>[4Fe-4S] cluster</name>
        <dbReference type="ChEBI" id="CHEBI:49883"/>
        <label>3</label>
    </ligand>
</feature>
<feature type="binding site" evidence="1">
    <location>
        <position position="147"/>
    </location>
    <ligand>
        <name>[4Fe-4S] cluster</name>
        <dbReference type="ChEBI" id="CHEBI:49883"/>
        <label>3</label>
    </ligand>
</feature>
<feature type="binding site" evidence="1">
    <location>
        <position position="150"/>
    </location>
    <ligand>
        <name>[4Fe-4S] cluster</name>
        <dbReference type="ChEBI" id="CHEBI:49883"/>
        <label>3</label>
    </ligand>
</feature>
<feature type="binding site" evidence="1">
    <location>
        <position position="154"/>
    </location>
    <ligand>
        <name>[4Fe-4S] cluster</name>
        <dbReference type="ChEBI" id="CHEBI:49883"/>
        <label>2</label>
    </ligand>
</feature>
<name>RNFB_VIBCH</name>
<comment type="function">
    <text evidence="1">Part of a membrane-bound complex that couples electron transfer with translocation of ions across the membrane.</text>
</comment>
<comment type="cofactor">
    <cofactor evidence="1">
        <name>[4Fe-4S] cluster</name>
        <dbReference type="ChEBI" id="CHEBI:49883"/>
    </cofactor>
    <text evidence="1">Binds 3 [4Fe-4S] clusters.</text>
</comment>
<comment type="subunit">
    <text evidence="1">The complex is composed of six subunits: RnfA, RnfB, RnfC, RnfD, RnfE and RnfG.</text>
</comment>
<comment type="subcellular location">
    <subcellularLocation>
        <location evidence="1">Cell inner membrane</location>
    </subcellularLocation>
</comment>
<comment type="similarity">
    <text evidence="1">Belongs to the 4Fe4S bacterial-type ferredoxin family. RnfB subfamily.</text>
</comment>
<protein>
    <recommendedName>
        <fullName evidence="1">Ion-translocating oxidoreductase complex subunit B</fullName>
        <ecNumber evidence="1">7.-.-.-</ecNumber>
    </recommendedName>
    <alternativeName>
        <fullName evidence="1">Rnf electron transport complex subunit B</fullName>
    </alternativeName>
</protein>
<gene>
    <name evidence="1" type="primary">rnfB</name>
    <name type="ordered locus">VC_1016</name>
</gene>
<organism>
    <name type="scientific">Vibrio cholerae serotype O1 (strain ATCC 39315 / El Tor Inaba N16961)</name>
    <dbReference type="NCBI Taxonomy" id="243277"/>
    <lineage>
        <taxon>Bacteria</taxon>
        <taxon>Pseudomonadati</taxon>
        <taxon>Pseudomonadota</taxon>
        <taxon>Gammaproteobacteria</taxon>
        <taxon>Vibrionales</taxon>
        <taxon>Vibrionaceae</taxon>
        <taxon>Vibrio</taxon>
    </lineage>
</organism>
<reference key="1">
    <citation type="journal article" date="2000" name="Nature">
        <title>DNA sequence of both chromosomes of the cholera pathogen Vibrio cholerae.</title>
        <authorList>
            <person name="Heidelberg J.F."/>
            <person name="Eisen J.A."/>
            <person name="Nelson W.C."/>
            <person name="Clayton R.A."/>
            <person name="Gwinn M.L."/>
            <person name="Dodson R.J."/>
            <person name="Haft D.H."/>
            <person name="Hickey E.K."/>
            <person name="Peterson J.D."/>
            <person name="Umayam L.A."/>
            <person name="Gill S.R."/>
            <person name="Nelson K.E."/>
            <person name="Read T.D."/>
            <person name="Tettelin H."/>
            <person name="Richardson D.L."/>
            <person name="Ermolaeva M.D."/>
            <person name="Vamathevan J.J."/>
            <person name="Bass S."/>
            <person name="Qin H."/>
            <person name="Dragoi I."/>
            <person name="Sellers P."/>
            <person name="McDonald L.A."/>
            <person name="Utterback T.R."/>
            <person name="Fleischmann R.D."/>
            <person name="Nierman W.C."/>
            <person name="White O."/>
            <person name="Salzberg S.L."/>
            <person name="Smith H.O."/>
            <person name="Colwell R.R."/>
            <person name="Mekalanos J.J."/>
            <person name="Venter J.C."/>
            <person name="Fraser C.M."/>
        </authorList>
    </citation>
    <scope>NUCLEOTIDE SEQUENCE [LARGE SCALE GENOMIC DNA]</scope>
    <source>
        <strain>ATCC 39315 / El Tor Inaba N16961</strain>
    </source>
</reference>
<keyword id="KW-0004">4Fe-4S</keyword>
<keyword id="KW-0997">Cell inner membrane</keyword>
<keyword id="KW-1003">Cell membrane</keyword>
<keyword id="KW-0249">Electron transport</keyword>
<keyword id="KW-0408">Iron</keyword>
<keyword id="KW-0411">Iron-sulfur</keyword>
<keyword id="KW-0472">Membrane</keyword>
<keyword id="KW-0479">Metal-binding</keyword>
<keyword id="KW-1185">Reference proteome</keyword>
<keyword id="KW-0677">Repeat</keyword>
<keyword id="KW-1278">Translocase</keyword>
<keyword id="KW-0813">Transport</keyword>
<sequence length="195" mass="20441">MSTIVIAVIALAALAAVFGAILGFASIRFKVEADPIVDQIDAILPQTQCGQCGYPGCRPYAEAIANGDAINKCPPGGQATIEKLADLMGVEVQDSAHDLDNKVKMVAFIHEDMCIGCTKCIQACPVDAIVGGNKAVHTVIKNECTGCDLCVAPCPTDCIEMIPVQTTPESWKWQLNAIPVVNVTDSAPAAQKSAN</sequence>
<proteinExistence type="inferred from homology"/>